<comment type="function">
    <text evidence="1">Together with the chaperonin GroEL, plays an essential role in assisting protein folding. The GroEL-GroES system forms a nano-cage that allows encapsulation of the non-native substrate proteins and provides a physical environment optimized to promote and accelerate protein folding. GroES binds to the apical surface of the GroEL ring, thereby capping the opening of the GroEL channel.</text>
</comment>
<comment type="subunit">
    <text evidence="1">Heptamer of 7 subunits arranged in a ring. Interacts with the chaperonin GroEL.</text>
</comment>
<comment type="subcellular location">
    <subcellularLocation>
        <location evidence="1">Cytoplasm</location>
    </subcellularLocation>
</comment>
<comment type="similarity">
    <text evidence="1">Belongs to the GroES chaperonin family.</text>
</comment>
<gene>
    <name evidence="1" type="primary">groES</name>
    <name evidence="1" type="synonym">groS</name>
    <name type="ordered locus">SPN23F19310</name>
</gene>
<proteinExistence type="inferred from homology"/>
<dbReference type="EMBL" id="FM211187">
    <property type="protein sequence ID" value="CAR69684.1"/>
    <property type="molecule type" value="Genomic_DNA"/>
</dbReference>
<dbReference type="RefSeq" id="WP_000917299.1">
    <property type="nucleotide sequence ID" value="NC_011900.1"/>
</dbReference>
<dbReference type="SMR" id="B8ZNL0"/>
<dbReference type="KEGG" id="sne:SPN23F19310"/>
<dbReference type="HOGENOM" id="CLU_132825_1_2_9"/>
<dbReference type="GO" id="GO:0005737">
    <property type="term" value="C:cytoplasm"/>
    <property type="evidence" value="ECO:0007669"/>
    <property type="project" value="UniProtKB-SubCell"/>
</dbReference>
<dbReference type="GO" id="GO:0005524">
    <property type="term" value="F:ATP binding"/>
    <property type="evidence" value="ECO:0007669"/>
    <property type="project" value="InterPro"/>
</dbReference>
<dbReference type="GO" id="GO:0046872">
    <property type="term" value="F:metal ion binding"/>
    <property type="evidence" value="ECO:0007669"/>
    <property type="project" value="TreeGrafter"/>
</dbReference>
<dbReference type="GO" id="GO:0044183">
    <property type="term" value="F:protein folding chaperone"/>
    <property type="evidence" value="ECO:0007669"/>
    <property type="project" value="InterPro"/>
</dbReference>
<dbReference type="GO" id="GO:0051087">
    <property type="term" value="F:protein-folding chaperone binding"/>
    <property type="evidence" value="ECO:0007669"/>
    <property type="project" value="TreeGrafter"/>
</dbReference>
<dbReference type="GO" id="GO:0051082">
    <property type="term" value="F:unfolded protein binding"/>
    <property type="evidence" value="ECO:0007669"/>
    <property type="project" value="TreeGrafter"/>
</dbReference>
<dbReference type="GO" id="GO:0051085">
    <property type="term" value="P:chaperone cofactor-dependent protein refolding"/>
    <property type="evidence" value="ECO:0007669"/>
    <property type="project" value="TreeGrafter"/>
</dbReference>
<dbReference type="CDD" id="cd00320">
    <property type="entry name" value="cpn10"/>
    <property type="match status" value="1"/>
</dbReference>
<dbReference type="FunFam" id="2.30.33.40:FF:000007">
    <property type="entry name" value="10 kDa chaperonin"/>
    <property type="match status" value="1"/>
</dbReference>
<dbReference type="Gene3D" id="2.30.33.40">
    <property type="entry name" value="GroES chaperonin"/>
    <property type="match status" value="1"/>
</dbReference>
<dbReference type="HAMAP" id="MF_00580">
    <property type="entry name" value="CH10"/>
    <property type="match status" value="1"/>
</dbReference>
<dbReference type="InterPro" id="IPR020818">
    <property type="entry name" value="Chaperonin_GroES"/>
</dbReference>
<dbReference type="InterPro" id="IPR037124">
    <property type="entry name" value="Chaperonin_GroES_sf"/>
</dbReference>
<dbReference type="InterPro" id="IPR018369">
    <property type="entry name" value="Chaprnonin_Cpn10_CS"/>
</dbReference>
<dbReference type="InterPro" id="IPR011032">
    <property type="entry name" value="GroES-like_sf"/>
</dbReference>
<dbReference type="NCBIfam" id="NF001528">
    <property type="entry name" value="PRK00364.1-4"/>
    <property type="match status" value="1"/>
</dbReference>
<dbReference type="PANTHER" id="PTHR10772">
    <property type="entry name" value="10 KDA HEAT SHOCK PROTEIN"/>
    <property type="match status" value="1"/>
</dbReference>
<dbReference type="PANTHER" id="PTHR10772:SF58">
    <property type="entry name" value="CO-CHAPERONIN GROES"/>
    <property type="match status" value="1"/>
</dbReference>
<dbReference type="Pfam" id="PF00166">
    <property type="entry name" value="Cpn10"/>
    <property type="match status" value="1"/>
</dbReference>
<dbReference type="PRINTS" id="PR00297">
    <property type="entry name" value="CHAPERONIN10"/>
</dbReference>
<dbReference type="SMART" id="SM00883">
    <property type="entry name" value="Cpn10"/>
    <property type="match status" value="1"/>
</dbReference>
<dbReference type="SUPFAM" id="SSF50129">
    <property type="entry name" value="GroES-like"/>
    <property type="match status" value="1"/>
</dbReference>
<dbReference type="PROSITE" id="PS00681">
    <property type="entry name" value="CHAPERONINS_CPN10"/>
    <property type="match status" value="1"/>
</dbReference>
<sequence length="94" mass="9912">MLKPLGDRLVLKVEEKEQTVGGFVLAGSAQEKTKTAQVVATGQGVRTLNGDLVAPSVKTGDRVLVEAHAGLDVKDGDEKYIIVGEANILAIIEE</sequence>
<reference key="1">
    <citation type="journal article" date="2009" name="J. Bacteriol.">
        <title>Role of conjugative elements in the evolution of the multidrug-resistant pandemic clone Streptococcus pneumoniae Spain23F ST81.</title>
        <authorList>
            <person name="Croucher N.J."/>
            <person name="Walker D."/>
            <person name="Romero P."/>
            <person name="Lennard N."/>
            <person name="Paterson G.K."/>
            <person name="Bason N.C."/>
            <person name="Mitchell A.M."/>
            <person name="Quail M.A."/>
            <person name="Andrew P.W."/>
            <person name="Parkhill J."/>
            <person name="Bentley S.D."/>
            <person name="Mitchell T.J."/>
        </authorList>
    </citation>
    <scope>NUCLEOTIDE SEQUENCE [LARGE SCALE GENOMIC DNA]</scope>
    <source>
        <strain>ATCC 700669 / Spain 23F-1</strain>
    </source>
</reference>
<evidence type="ECO:0000255" key="1">
    <source>
        <dbReference type="HAMAP-Rule" id="MF_00580"/>
    </source>
</evidence>
<organism>
    <name type="scientific">Streptococcus pneumoniae (strain ATCC 700669 / Spain 23F-1)</name>
    <dbReference type="NCBI Taxonomy" id="561276"/>
    <lineage>
        <taxon>Bacteria</taxon>
        <taxon>Bacillati</taxon>
        <taxon>Bacillota</taxon>
        <taxon>Bacilli</taxon>
        <taxon>Lactobacillales</taxon>
        <taxon>Streptococcaceae</taxon>
        <taxon>Streptococcus</taxon>
    </lineage>
</organism>
<name>CH10_STRPJ</name>
<keyword id="KW-0143">Chaperone</keyword>
<keyword id="KW-0963">Cytoplasm</keyword>
<accession>B8ZNL0</accession>
<feature type="chain" id="PRO_1000146919" description="Co-chaperonin GroES">
    <location>
        <begin position="1"/>
        <end position="94"/>
    </location>
</feature>
<protein>
    <recommendedName>
        <fullName evidence="1">Co-chaperonin GroES</fullName>
    </recommendedName>
    <alternativeName>
        <fullName evidence="1">10 kDa chaperonin</fullName>
    </alternativeName>
    <alternativeName>
        <fullName evidence="1">Chaperonin-10</fullName>
        <shortName evidence="1">Cpn10</shortName>
    </alternativeName>
</protein>